<name>RIR2_GAHVM</name>
<dbReference type="EC" id="1.17.4.1" evidence="1"/>
<dbReference type="EMBL" id="AF243438">
    <property type="protein sequence ID" value="AAG14233.1"/>
    <property type="molecule type" value="Genomic_DNA"/>
</dbReference>
<dbReference type="RefSeq" id="YP_001033969.1">
    <property type="nucleotide sequence ID" value="NC_002229.3"/>
</dbReference>
<dbReference type="SMR" id="Q77MS0"/>
<dbReference type="GeneID" id="4811514"/>
<dbReference type="KEGG" id="vg:4811514"/>
<dbReference type="Proteomes" id="UP000008072">
    <property type="component" value="Segment"/>
</dbReference>
<dbReference type="GO" id="GO:0033644">
    <property type="term" value="C:host cell membrane"/>
    <property type="evidence" value="ECO:0007669"/>
    <property type="project" value="UniProtKB-SubCell"/>
</dbReference>
<dbReference type="GO" id="GO:0016020">
    <property type="term" value="C:membrane"/>
    <property type="evidence" value="ECO:0007669"/>
    <property type="project" value="UniProtKB-KW"/>
</dbReference>
<dbReference type="GO" id="GO:0046872">
    <property type="term" value="F:metal ion binding"/>
    <property type="evidence" value="ECO:0007669"/>
    <property type="project" value="UniProtKB-KW"/>
</dbReference>
<dbReference type="GO" id="GO:0004748">
    <property type="term" value="F:ribonucleoside-diphosphate reductase activity, thioredoxin disulfide as acceptor"/>
    <property type="evidence" value="ECO:0007669"/>
    <property type="project" value="UniProtKB-EC"/>
</dbReference>
<dbReference type="GO" id="GO:0009263">
    <property type="term" value="P:deoxyribonucleotide biosynthetic process"/>
    <property type="evidence" value="ECO:0007669"/>
    <property type="project" value="InterPro"/>
</dbReference>
<dbReference type="GO" id="GO:0006260">
    <property type="term" value="P:DNA replication"/>
    <property type="evidence" value="ECO:0007669"/>
    <property type="project" value="UniProtKB-KW"/>
</dbReference>
<dbReference type="CDD" id="cd01049">
    <property type="entry name" value="RNRR2"/>
    <property type="match status" value="1"/>
</dbReference>
<dbReference type="Gene3D" id="1.10.620.20">
    <property type="entry name" value="Ribonucleotide Reductase, subunit A"/>
    <property type="match status" value="1"/>
</dbReference>
<dbReference type="HAMAP" id="MF_04028">
    <property type="entry name" value="HSV_RIR2"/>
    <property type="match status" value="1"/>
</dbReference>
<dbReference type="InterPro" id="IPR009078">
    <property type="entry name" value="Ferritin-like_SF"/>
</dbReference>
<dbReference type="InterPro" id="IPR034715">
    <property type="entry name" value="HSV_RIR2"/>
</dbReference>
<dbReference type="InterPro" id="IPR012348">
    <property type="entry name" value="RNR-like"/>
</dbReference>
<dbReference type="InterPro" id="IPR033909">
    <property type="entry name" value="RNR_small"/>
</dbReference>
<dbReference type="InterPro" id="IPR030475">
    <property type="entry name" value="RNR_small_AS"/>
</dbReference>
<dbReference type="InterPro" id="IPR000358">
    <property type="entry name" value="RNR_small_fam"/>
</dbReference>
<dbReference type="PANTHER" id="PTHR23409">
    <property type="entry name" value="RIBONUCLEOSIDE-DIPHOSPHATE REDUCTASE SMALL CHAIN"/>
    <property type="match status" value="1"/>
</dbReference>
<dbReference type="PANTHER" id="PTHR23409:SF18">
    <property type="entry name" value="RIBONUCLEOSIDE-DIPHOSPHATE REDUCTASE SUBUNIT M2"/>
    <property type="match status" value="1"/>
</dbReference>
<dbReference type="Pfam" id="PF00268">
    <property type="entry name" value="Ribonuc_red_sm"/>
    <property type="match status" value="1"/>
</dbReference>
<dbReference type="SUPFAM" id="SSF47240">
    <property type="entry name" value="Ferritin-like"/>
    <property type="match status" value="1"/>
</dbReference>
<dbReference type="PROSITE" id="PS00368">
    <property type="entry name" value="RIBORED_SMALL"/>
    <property type="match status" value="1"/>
</dbReference>
<sequence length="343" mass="39060">MSGPPSHEIGMLYSLAPSVDMKSENIEDLPSESIPTTNHCASNYFYAPECPDIGHLRALSIMNRWTETEFVISDDLRDVSMLTEEERYFYRFLFTFLSAADDLVNLNIDNLLGLFSQKDIHHYYFEQECIEAVHSRAYSIIQLMLFDNDSLARAEYVKTSLNSPAIQSKLDWLNKRVIECSSIAEKYILMILIEGIFFSASFAAIAYLRINNLFVVTCQINNLISRDEAIHVEASCCIFKNYLMGPKPSIGRVQELFKEAVQIECAFLRTAAPRNSQLLDVEAICSYVRYSADRLLKELDMPPIYNEPKPTADFPLALMTASNNTNFFERRNTAYSGSVSNDL</sequence>
<reference key="1">
    <citation type="journal article" date="2000" name="J. Virol.">
        <title>The genome of a very virulent Marek's disease virus.</title>
        <authorList>
            <person name="Tulman E.R."/>
            <person name="Afonso C.L."/>
            <person name="Lu Z."/>
            <person name="Zsak L."/>
            <person name="Rock D.L."/>
            <person name="Kutish G.F."/>
        </authorList>
    </citation>
    <scope>NUCLEOTIDE SEQUENCE [LARGE SCALE GENOMIC DNA]</scope>
</reference>
<feature type="chain" id="PRO_0000406511" description="Ribonucleoside-diphosphate reductase small subunit">
    <location>
        <begin position="1"/>
        <end position="343"/>
    </location>
</feature>
<feature type="transmembrane region" description="Helical" evidence="1">
    <location>
        <begin position="188"/>
        <end position="208"/>
    </location>
</feature>
<feature type="active site" evidence="1">
    <location>
        <position position="138"/>
    </location>
</feature>
<feature type="binding site" evidence="1">
    <location>
        <position position="101"/>
    </location>
    <ligand>
        <name>Fe cation</name>
        <dbReference type="ChEBI" id="CHEBI:24875"/>
        <label>1</label>
    </ligand>
</feature>
<feature type="binding site" evidence="1">
    <location>
        <position position="131"/>
    </location>
    <ligand>
        <name>Fe cation</name>
        <dbReference type="ChEBI" id="CHEBI:24875"/>
        <label>1</label>
    </ligand>
</feature>
<feature type="binding site" evidence="1">
    <location>
        <position position="131"/>
    </location>
    <ligand>
        <name>Fe cation</name>
        <dbReference type="ChEBI" id="CHEBI:24875"/>
        <label>2</label>
    </ligand>
</feature>
<feature type="binding site" evidence="1">
    <location>
        <position position="134"/>
    </location>
    <ligand>
        <name>Fe cation</name>
        <dbReference type="ChEBI" id="CHEBI:24875"/>
        <label>1</label>
    </ligand>
</feature>
<feature type="binding site" evidence="1">
    <location>
        <position position="194"/>
    </location>
    <ligand>
        <name>Fe cation</name>
        <dbReference type="ChEBI" id="CHEBI:24875"/>
        <label>2</label>
    </ligand>
</feature>
<feature type="binding site" evidence="1">
    <location>
        <position position="228"/>
    </location>
    <ligand>
        <name>Fe cation</name>
        <dbReference type="ChEBI" id="CHEBI:24875"/>
        <label>2</label>
    </ligand>
</feature>
<feature type="binding site" evidence="1">
    <location>
        <position position="231"/>
    </location>
    <ligand>
        <name>Fe cation</name>
        <dbReference type="ChEBI" id="CHEBI:24875"/>
        <label>2</label>
    </ligand>
</feature>
<gene>
    <name evidence="1" type="primary">RIR2</name>
    <name type="synonym">MDV053</name>
</gene>
<proteinExistence type="inferred from homology"/>
<organism>
    <name type="scientific">Gallid herpesvirus 2 (strain Chicken/Md5/ATCC VR-987)</name>
    <name type="common">GaHV-2</name>
    <name type="synonym">Marek's disease herpesvirus type 1</name>
    <dbReference type="NCBI Taxonomy" id="10389"/>
    <lineage>
        <taxon>Viruses</taxon>
        <taxon>Duplodnaviria</taxon>
        <taxon>Heunggongvirae</taxon>
        <taxon>Peploviricota</taxon>
        <taxon>Herviviricetes</taxon>
        <taxon>Herpesvirales</taxon>
        <taxon>Orthoherpesviridae</taxon>
        <taxon>Alphaherpesvirinae</taxon>
        <taxon>Mardivirus</taxon>
        <taxon>Mardivirus gallidalpha2</taxon>
        <taxon>Gallid alphaherpesvirus 2</taxon>
    </lineage>
</organism>
<accession>Q77MS0</accession>
<comment type="function">
    <text evidence="1">Ribonucleoside-diphosphate reductase holoenzyme provides the precursors necessary for viral DNA synthesis. Allows virus growth in non-dividing cells, as well as reactivation from latency in infected hosts. Catalyzes the biosynthesis of deoxyribonucleotides from the corresponding ribonucleotides.</text>
</comment>
<comment type="catalytic activity">
    <reaction evidence="1">
        <text>a 2'-deoxyribonucleoside 5'-diphosphate + [thioredoxin]-disulfide + H2O = a ribonucleoside 5'-diphosphate + [thioredoxin]-dithiol</text>
        <dbReference type="Rhea" id="RHEA:23252"/>
        <dbReference type="Rhea" id="RHEA-COMP:10698"/>
        <dbReference type="Rhea" id="RHEA-COMP:10700"/>
        <dbReference type="ChEBI" id="CHEBI:15377"/>
        <dbReference type="ChEBI" id="CHEBI:29950"/>
        <dbReference type="ChEBI" id="CHEBI:50058"/>
        <dbReference type="ChEBI" id="CHEBI:57930"/>
        <dbReference type="ChEBI" id="CHEBI:73316"/>
        <dbReference type="EC" id="1.17.4.1"/>
    </reaction>
</comment>
<comment type="cofactor">
    <cofactor evidence="1">
        <name>Fe cation</name>
        <dbReference type="ChEBI" id="CHEBI:24875"/>
    </cofactor>
</comment>
<comment type="subunit">
    <text evidence="1">Heterotetramer composed of a homodimer of the large subunit (R1) and a homodimer of the small subunit (R2). Larger multisubunit protein complex are also active, composed of (R1)n(R2)n.</text>
</comment>
<comment type="subcellular location">
    <subcellularLocation>
        <location evidence="1">Host membrane</location>
        <topology evidence="1">Single-pass membrane protein</topology>
    </subcellularLocation>
</comment>
<comment type="similarity">
    <text evidence="1">Belongs to the ribonucleoside diphosphate reductase small chain family.</text>
</comment>
<keyword id="KW-0235">DNA replication</keyword>
<keyword id="KW-1043">Host membrane</keyword>
<keyword id="KW-0408">Iron</keyword>
<keyword id="KW-0472">Membrane</keyword>
<keyword id="KW-0479">Metal-binding</keyword>
<keyword id="KW-0560">Oxidoreductase</keyword>
<keyword id="KW-1185">Reference proteome</keyword>
<keyword id="KW-0812">Transmembrane</keyword>
<keyword id="KW-1133">Transmembrane helix</keyword>
<evidence type="ECO:0000255" key="1">
    <source>
        <dbReference type="HAMAP-Rule" id="MF_04028"/>
    </source>
</evidence>
<protein>
    <recommendedName>
        <fullName evidence="1">Ribonucleoside-diphosphate reductase small subunit</fullName>
        <ecNumber evidence="1">1.17.4.1</ecNumber>
    </recommendedName>
    <alternativeName>
        <fullName evidence="1">Ribonucleotide reductase small subunit</fullName>
    </alternativeName>
</protein>
<organismHost>
    <name type="scientific">Gallus gallus</name>
    <name type="common">Chicken</name>
    <dbReference type="NCBI Taxonomy" id="9031"/>
</organismHost>